<comment type="function">
    <text evidence="1">NDH-1 shuttles electrons from NADH, via FMN and iron-sulfur (Fe-S) centers, to quinones in the respiratory chain. The immediate electron acceptor for the enzyme in this species is believed to be ubiquinone. Couples the redox reaction to proton translocation (for every two electrons transferred, four hydrogen ions are translocated across the cytoplasmic membrane), and thus conserves the redox energy in a proton gradient.</text>
</comment>
<comment type="catalytic activity">
    <reaction evidence="1">
        <text>a quinone + NADH + 5 H(+)(in) = a quinol + NAD(+) + 4 H(+)(out)</text>
        <dbReference type="Rhea" id="RHEA:57888"/>
        <dbReference type="ChEBI" id="CHEBI:15378"/>
        <dbReference type="ChEBI" id="CHEBI:24646"/>
        <dbReference type="ChEBI" id="CHEBI:57540"/>
        <dbReference type="ChEBI" id="CHEBI:57945"/>
        <dbReference type="ChEBI" id="CHEBI:132124"/>
    </reaction>
</comment>
<comment type="subunit">
    <text evidence="1">NDH-1 is composed of 13 different subunits. Subunits NuoA, H, J, K, L, M, N constitute the membrane sector of the complex.</text>
</comment>
<comment type="subcellular location">
    <subcellularLocation>
        <location evidence="1">Cell inner membrane</location>
        <topology evidence="1">Multi-pass membrane protein</topology>
    </subcellularLocation>
</comment>
<comment type="similarity">
    <text evidence="1">Belongs to the complex I subunit 3 family.</text>
</comment>
<proteinExistence type="inferred from homology"/>
<name>NUOA_SERP5</name>
<evidence type="ECO:0000255" key="1">
    <source>
        <dbReference type="HAMAP-Rule" id="MF_01394"/>
    </source>
</evidence>
<dbReference type="EC" id="7.1.1.-" evidence="1"/>
<dbReference type="EMBL" id="CP000826">
    <property type="protein sequence ID" value="ABV42406.1"/>
    <property type="molecule type" value="Genomic_DNA"/>
</dbReference>
<dbReference type="SMR" id="A8GH16"/>
<dbReference type="STRING" id="399741.Spro_3308"/>
<dbReference type="KEGG" id="spe:Spro_3308"/>
<dbReference type="eggNOG" id="COG0838">
    <property type="taxonomic scope" value="Bacteria"/>
</dbReference>
<dbReference type="HOGENOM" id="CLU_119549_2_1_6"/>
<dbReference type="OrthoDB" id="9791970at2"/>
<dbReference type="GO" id="GO:0030964">
    <property type="term" value="C:NADH dehydrogenase complex"/>
    <property type="evidence" value="ECO:0007669"/>
    <property type="project" value="TreeGrafter"/>
</dbReference>
<dbReference type="GO" id="GO:0005886">
    <property type="term" value="C:plasma membrane"/>
    <property type="evidence" value="ECO:0007669"/>
    <property type="project" value="UniProtKB-SubCell"/>
</dbReference>
<dbReference type="GO" id="GO:0008137">
    <property type="term" value="F:NADH dehydrogenase (ubiquinone) activity"/>
    <property type="evidence" value="ECO:0007669"/>
    <property type="project" value="InterPro"/>
</dbReference>
<dbReference type="GO" id="GO:0050136">
    <property type="term" value="F:NADH:ubiquinone reductase (non-electrogenic) activity"/>
    <property type="evidence" value="ECO:0007669"/>
    <property type="project" value="UniProtKB-UniRule"/>
</dbReference>
<dbReference type="GO" id="GO:0048038">
    <property type="term" value="F:quinone binding"/>
    <property type="evidence" value="ECO:0007669"/>
    <property type="project" value="UniProtKB-KW"/>
</dbReference>
<dbReference type="FunFam" id="1.20.58.1610:FF:000003">
    <property type="entry name" value="NADH-quinone oxidoreductase subunit A"/>
    <property type="match status" value="1"/>
</dbReference>
<dbReference type="Gene3D" id="1.20.58.1610">
    <property type="entry name" value="NADH:ubiquinone/plastoquinone oxidoreductase, chain 3"/>
    <property type="match status" value="1"/>
</dbReference>
<dbReference type="HAMAP" id="MF_01394">
    <property type="entry name" value="NDH1_NuoA"/>
    <property type="match status" value="1"/>
</dbReference>
<dbReference type="InterPro" id="IPR023043">
    <property type="entry name" value="NAD(P)H_OxRDtase_bac/plastid"/>
</dbReference>
<dbReference type="InterPro" id="IPR000440">
    <property type="entry name" value="NADH_UbQ/plastoQ_OxRdtase_su3"/>
</dbReference>
<dbReference type="InterPro" id="IPR038430">
    <property type="entry name" value="NDAH_ubi_oxred_su3_sf"/>
</dbReference>
<dbReference type="PANTHER" id="PTHR11058:SF21">
    <property type="entry name" value="NADH-QUINONE OXIDOREDUCTASE SUBUNIT A"/>
    <property type="match status" value="1"/>
</dbReference>
<dbReference type="PANTHER" id="PTHR11058">
    <property type="entry name" value="NADH-UBIQUINONE OXIDOREDUCTASE CHAIN 3"/>
    <property type="match status" value="1"/>
</dbReference>
<dbReference type="Pfam" id="PF00507">
    <property type="entry name" value="Oxidored_q4"/>
    <property type="match status" value="1"/>
</dbReference>
<keyword id="KW-0997">Cell inner membrane</keyword>
<keyword id="KW-1003">Cell membrane</keyword>
<keyword id="KW-0472">Membrane</keyword>
<keyword id="KW-0520">NAD</keyword>
<keyword id="KW-0874">Quinone</keyword>
<keyword id="KW-1278">Translocase</keyword>
<keyword id="KW-0812">Transmembrane</keyword>
<keyword id="KW-1133">Transmembrane helix</keyword>
<keyword id="KW-0813">Transport</keyword>
<keyword id="KW-0830">Ubiquinone</keyword>
<accession>A8GH16</accession>
<sequence>MSTTTEVIAHHWAFAVFFVVAIGLCCLMLMGAFFLGGRARARAKHTPFESGIDSVGTARMRLSAKFYLVAMFFVIFDVEALYLYAWSVSIRESGWVGFIEAAIFILVLLAGLVYLVRIGALDWTPVRSRRQSKPGTIKNATNSHPQ</sequence>
<feature type="chain" id="PRO_5000279557" description="NADH-quinone oxidoreductase subunit A">
    <location>
        <begin position="1"/>
        <end position="146"/>
    </location>
</feature>
<feature type="transmembrane region" description="Helical" evidence="1">
    <location>
        <begin position="14"/>
        <end position="34"/>
    </location>
</feature>
<feature type="transmembrane region" description="Helical" evidence="1">
    <location>
        <begin position="66"/>
        <end position="86"/>
    </location>
</feature>
<feature type="transmembrane region" description="Helical" evidence="1">
    <location>
        <begin position="96"/>
        <end position="116"/>
    </location>
</feature>
<organism>
    <name type="scientific">Serratia proteamaculans (strain 568)</name>
    <dbReference type="NCBI Taxonomy" id="399741"/>
    <lineage>
        <taxon>Bacteria</taxon>
        <taxon>Pseudomonadati</taxon>
        <taxon>Pseudomonadota</taxon>
        <taxon>Gammaproteobacteria</taxon>
        <taxon>Enterobacterales</taxon>
        <taxon>Yersiniaceae</taxon>
        <taxon>Serratia</taxon>
    </lineage>
</organism>
<protein>
    <recommendedName>
        <fullName evidence="1">NADH-quinone oxidoreductase subunit A</fullName>
        <ecNumber evidence="1">7.1.1.-</ecNumber>
    </recommendedName>
    <alternativeName>
        <fullName evidence="1">NADH dehydrogenase I subunit A</fullName>
    </alternativeName>
    <alternativeName>
        <fullName evidence="1">NDH-1 subunit A</fullName>
    </alternativeName>
    <alternativeName>
        <fullName evidence="1">NUO1</fullName>
    </alternativeName>
</protein>
<gene>
    <name evidence="1" type="primary">nuoA</name>
    <name type="ordered locus">Spro_3308</name>
</gene>
<reference key="1">
    <citation type="submission" date="2007-09" db="EMBL/GenBank/DDBJ databases">
        <title>Complete sequence of chromosome of Serratia proteamaculans 568.</title>
        <authorList>
            <consortium name="US DOE Joint Genome Institute"/>
            <person name="Copeland A."/>
            <person name="Lucas S."/>
            <person name="Lapidus A."/>
            <person name="Barry K."/>
            <person name="Glavina del Rio T."/>
            <person name="Dalin E."/>
            <person name="Tice H."/>
            <person name="Pitluck S."/>
            <person name="Chain P."/>
            <person name="Malfatti S."/>
            <person name="Shin M."/>
            <person name="Vergez L."/>
            <person name="Schmutz J."/>
            <person name="Larimer F."/>
            <person name="Land M."/>
            <person name="Hauser L."/>
            <person name="Kyrpides N."/>
            <person name="Kim E."/>
            <person name="Taghavi S."/>
            <person name="Newman L."/>
            <person name="Vangronsveld J."/>
            <person name="van der Lelie D."/>
            <person name="Richardson P."/>
        </authorList>
    </citation>
    <scope>NUCLEOTIDE SEQUENCE [LARGE SCALE GENOMIC DNA]</scope>
    <source>
        <strain>568</strain>
    </source>
</reference>